<evidence type="ECO:0000255" key="1">
    <source>
        <dbReference type="HAMAP-Rule" id="MF_00044"/>
    </source>
</evidence>
<comment type="function">
    <text evidence="1">Aspartyl-tRNA synthetase with relaxed tRNA specificity since it is able to aspartylate not only its cognate tRNA(Asp) but also tRNA(Asn). Reaction proceeds in two steps: L-aspartate is first activated by ATP to form Asp-AMP and then transferred to the acceptor end of tRNA(Asp/Asn).</text>
</comment>
<comment type="catalytic activity">
    <reaction evidence="1">
        <text>tRNA(Asx) + L-aspartate + ATP = L-aspartyl-tRNA(Asx) + AMP + diphosphate</text>
        <dbReference type="Rhea" id="RHEA:18349"/>
        <dbReference type="Rhea" id="RHEA-COMP:9710"/>
        <dbReference type="Rhea" id="RHEA-COMP:9711"/>
        <dbReference type="ChEBI" id="CHEBI:29991"/>
        <dbReference type="ChEBI" id="CHEBI:30616"/>
        <dbReference type="ChEBI" id="CHEBI:33019"/>
        <dbReference type="ChEBI" id="CHEBI:78442"/>
        <dbReference type="ChEBI" id="CHEBI:78516"/>
        <dbReference type="ChEBI" id="CHEBI:456215"/>
        <dbReference type="EC" id="6.1.1.23"/>
    </reaction>
</comment>
<comment type="subunit">
    <text evidence="1">Homodimer.</text>
</comment>
<comment type="subcellular location">
    <subcellularLocation>
        <location evidence="1">Cytoplasm</location>
    </subcellularLocation>
</comment>
<comment type="similarity">
    <text evidence="1">Belongs to the class-II aminoacyl-tRNA synthetase family. Type 1 subfamily.</text>
</comment>
<gene>
    <name evidence="1" type="primary">aspS</name>
    <name type="ordered locus">Noc_0302</name>
</gene>
<accession>Q3JEB6</accession>
<feature type="chain" id="PRO_0000235536" description="Aspartate--tRNA(Asp/Asn) ligase">
    <location>
        <begin position="1"/>
        <end position="595"/>
    </location>
</feature>
<feature type="region of interest" description="Aspartate" evidence="1">
    <location>
        <begin position="198"/>
        <end position="201"/>
    </location>
</feature>
<feature type="binding site" evidence="1">
    <location>
        <position position="174"/>
    </location>
    <ligand>
        <name>L-aspartate</name>
        <dbReference type="ChEBI" id="CHEBI:29991"/>
    </ligand>
</feature>
<feature type="binding site" evidence="1">
    <location>
        <begin position="220"/>
        <end position="222"/>
    </location>
    <ligand>
        <name>ATP</name>
        <dbReference type="ChEBI" id="CHEBI:30616"/>
    </ligand>
</feature>
<feature type="binding site" evidence="1">
    <location>
        <position position="220"/>
    </location>
    <ligand>
        <name>L-aspartate</name>
        <dbReference type="ChEBI" id="CHEBI:29991"/>
    </ligand>
</feature>
<feature type="binding site" evidence="1">
    <location>
        <position position="229"/>
    </location>
    <ligand>
        <name>ATP</name>
        <dbReference type="ChEBI" id="CHEBI:30616"/>
    </ligand>
</feature>
<feature type="binding site" evidence="1">
    <location>
        <position position="452"/>
    </location>
    <ligand>
        <name>L-aspartate</name>
        <dbReference type="ChEBI" id="CHEBI:29991"/>
    </ligand>
</feature>
<feature type="binding site" evidence="1">
    <location>
        <position position="486"/>
    </location>
    <ligand>
        <name>ATP</name>
        <dbReference type="ChEBI" id="CHEBI:30616"/>
    </ligand>
</feature>
<feature type="binding site" evidence="1">
    <location>
        <position position="493"/>
    </location>
    <ligand>
        <name>L-aspartate</name>
        <dbReference type="ChEBI" id="CHEBI:29991"/>
    </ligand>
</feature>
<feature type="binding site" evidence="1">
    <location>
        <begin position="538"/>
        <end position="541"/>
    </location>
    <ligand>
        <name>ATP</name>
        <dbReference type="ChEBI" id="CHEBI:30616"/>
    </ligand>
</feature>
<feature type="site" description="Important for tRNA non-discrimination" evidence="1">
    <location>
        <position position="30"/>
    </location>
</feature>
<feature type="site" description="Important for tRNA non-discrimination" evidence="1">
    <location>
        <position position="82"/>
    </location>
</feature>
<organism>
    <name type="scientific">Nitrosococcus oceani (strain ATCC 19707 / BCRC 17464 / JCM 30415 / NCIMB 11848 / C-107)</name>
    <dbReference type="NCBI Taxonomy" id="323261"/>
    <lineage>
        <taxon>Bacteria</taxon>
        <taxon>Pseudomonadati</taxon>
        <taxon>Pseudomonadota</taxon>
        <taxon>Gammaproteobacteria</taxon>
        <taxon>Chromatiales</taxon>
        <taxon>Chromatiaceae</taxon>
        <taxon>Nitrosococcus</taxon>
    </lineage>
</organism>
<protein>
    <recommendedName>
        <fullName evidence="1">Aspartate--tRNA(Asp/Asn) ligase</fullName>
        <ecNumber evidence="1">6.1.1.23</ecNumber>
    </recommendedName>
    <alternativeName>
        <fullName evidence="1">Aspartyl-tRNA synthetase</fullName>
        <shortName evidence="1">AspRS</shortName>
    </alternativeName>
    <alternativeName>
        <fullName evidence="1">Non-discriminating aspartyl-tRNA synthetase</fullName>
        <shortName evidence="1">ND-AspRS</shortName>
    </alternativeName>
</protein>
<proteinExistence type="inferred from homology"/>
<sequence>MRSHYCGELSEAHLDQSVTLCGWVNRRRDHGGVIFIDLRDREGLIQLVFDPEYSPESFRHAEQIRSEYVLQVKGRVQHRPEGTENPDLKTGQVEVLGQELILLNASETPPFPVDEKLEVGEDIRLRYRYIDLRRPESLQRLRFRSAIIRQLRKFLDERGFLDIDTPILTQSTPEGARDFLVPSRTHPGQFFALPQSPQLFKQLLMVAGVDRYYQVVRCFRDEDLRADRQPEFTQLDIEASFLHEETLMALMEEMFKELFATVLEVPLHTPFVRMPYAEALACFGLDKPDLRIPLRLVEVGDLMKTVDFKVFAQPAQDRDGRVAALRLPGGGKLSRKEIEEYTQFVAIYGAKGLAYIKVVERSRGREGLQSPILKFLPDEVIGAMLERTEAENGDIVFFGADKASIVNESLGALRVKLGHDHGLVEHGWSPLWVIDFPMFEWDEDDHRWHALHHPFTSPKEEDLSLLEQNPGACRSRAYDLVLNGTEVGGGSIRISQSQVQSQVFRLLGIGDEEAQDKFGFLLDALKYGCPPHGGIAFGLDRLVMLMTGSASIREVIPFPKTQTAACPLTGAPGQVAEAQLRELGIGVRRLASDKV</sequence>
<keyword id="KW-0030">Aminoacyl-tRNA synthetase</keyword>
<keyword id="KW-0067">ATP-binding</keyword>
<keyword id="KW-0963">Cytoplasm</keyword>
<keyword id="KW-0436">Ligase</keyword>
<keyword id="KW-0547">Nucleotide-binding</keyword>
<keyword id="KW-0648">Protein biosynthesis</keyword>
<keyword id="KW-1185">Reference proteome</keyword>
<reference key="1">
    <citation type="journal article" date="2006" name="Appl. Environ. Microbiol.">
        <title>Complete genome sequence of the marine, chemolithoautotrophic, ammonia-oxidizing bacterium Nitrosococcus oceani ATCC 19707.</title>
        <authorList>
            <person name="Klotz M.G."/>
            <person name="Arp D.J."/>
            <person name="Chain P.S.G."/>
            <person name="El-Sheikh A.F."/>
            <person name="Hauser L.J."/>
            <person name="Hommes N.G."/>
            <person name="Larimer F.W."/>
            <person name="Malfatti S.A."/>
            <person name="Norton J.M."/>
            <person name="Poret-Peterson A.T."/>
            <person name="Vergez L.M."/>
            <person name="Ward B.B."/>
        </authorList>
    </citation>
    <scope>NUCLEOTIDE SEQUENCE [LARGE SCALE GENOMIC DNA]</scope>
    <source>
        <strain>ATCC 19707 / BCRC 17464 / JCM 30415 / NCIMB 11848 / C-107</strain>
    </source>
</reference>
<name>SYDND_NITOC</name>
<dbReference type="EC" id="6.1.1.23" evidence="1"/>
<dbReference type="EMBL" id="CP000127">
    <property type="protein sequence ID" value="ABA56830.1"/>
    <property type="molecule type" value="Genomic_DNA"/>
</dbReference>
<dbReference type="RefSeq" id="WP_002813450.1">
    <property type="nucleotide sequence ID" value="NC_007484.1"/>
</dbReference>
<dbReference type="SMR" id="Q3JEB6"/>
<dbReference type="FunCoup" id="Q3JEB6">
    <property type="interactions" value="588"/>
</dbReference>
<dbReference type="STRING" id="323261.Noc_0302"/>
<dbReference type="KEGG" id="noc:Noc_0302"/>
<dbReference type="eggNOG" id="COG0173">
    <property type="taxonomic scope" value="Bacteria"/>
</dbReference>
<dbReference type="HOGENOM" id="CLU_014330_3_2_6"/>
<dbReference type="InParanoid" id="Q3JEB6"/>
<dbReference type="Proteomes" id="UP000006838">
    <property type="component" value="Chromosome"/>
</dbReference>
<dbReference type="GO" id="GO:0005737">
    <property type="term" value="C:cytoplasm"/>
    <property type="evidence" value="ECO:0007669"/>
    <property type="project" value="UniProtKB-SubCell"/>
</dbReference>
<dbReference type="GO" id="GO:0004815">
    <property type="term" value="F:aspartate-tRNA ligase activity"/>
    <property type="evidence" value="ECO:0007669"/>
    <property type="project" value="UniProtKB-UniRule"/>
</dbReference>
<dbReference type="GO" id="GO:0050560">
    <property type="term" value="F:aspartate-tRNA(Asn) ligase activity"/>
    <property type="evidence" value="ECO:0007669"/>
    <property type="project" value="UniProtKB-EC"/>
</dbReference>
<dbReference type="GO" id="GO:0005524">
    <property type="term" value="F:ATP binding"/>
    <property type="evidence" value="ECO:0007669"/>
    <property type="project" value="UniProtKB-UniRule"/>
</dbReference>
<dbReference type="GO" id="GO:0003676">
    <property type="term" value="F:nucleic acid binding"/>
    <property type="evidence" value="ECO:0007669"/>
    <property type="project" value="InterPro"/>
</dbReference>
<dbReference type="GO" id="GO:0006422">
    <property type="term" value="P:aspartyl-tRNA aminoacylation"/>
    <property type="evidence" value="ECO:0007669"/>
    <property type="project" value="UniProtKB-UniRule"/>
</dbReference>
<dbReference type="CDD" id="cd00777">
    <property type="entry name" value="AspRS_core"/>
    <property type="match status" value="1"/>
</dbReference>
<dbReference type="CDD" id="cd04317">
    <property type="entry name" value="EcAspRS_like_N"/>
    <property type="match status" value="1"/>
</dbReference>
<dbReference type="Gene3D" id="3.30.930.10">
    <property type="entry name" value="Bira Bifunctional Protein, Domain 2"/>
    <property type="match status" value="1"/>
</dbReference>
<dbReference type="Gene3D" id="3.30.1360.30">
    <property type="entry name" value="GAD-like domain"/>
    <property type="match status" value="1"/>
</dbReference>
<dbReference type="Gene3D" id="2.40.50.140">
    <property type="entry name" value="Nucleic acid-binding proteins"/>
    <property type="match status" value="1"/>
</dbReference>
<dbReference type="HAMAP" id="MF_00044">
    <property type="entry name" value="Asp_tRNA_synth_type1"/>
    <property type="match status" value="1"/>
</dbReference>
<dbReference type="InterPro" id="IPR004364">
    <property type="entry name" value="Aa-tRNA-synt_II"/>
</dbReference>
<dbReference type="InterPro" id="IPR006195">
    <property type="entry name" value="aa-tRNA-synth_II"/>
</dbReference>
<dbReference type="InterPro" id="IPR045864">
    <property type="entry name" value="aa-tRNA-synth_II/BPL/LPL"/>
</dbReference>
<dbReference type="InterPro" id="IPR004524">
    <property type="entry name" value="Asp-tRNA-ligase_1"/>
</dbReference>
<dbReference type="InterPro" id="IPR047089">
    <property type="entry name" value="Asp-tRNA-ligase_1_N"/>
</dbReference>
<dbReference type="InterPro" id="IPR002312">
    <property type="entry name" value="Asp/Asn-tRNA-synth_IIb"/>
</dbReference>
<dbReference type="InterPro" id="IPR047090">
    <property type="entry name" value="AspRS_core"/>
</dbReference>
<dbReference type="InterPro" id="IPR004115">
    <property type="entry name" value="GAD-like_sf"/>
</dbReference>
<dbReference type="InterPro" id="IPR029351">
    <property type="entry name" value="GAD_dom"/>
</dbReference>
<dbReference type="InterPro" id="IPR012340">
    <property type="entry name" value="NA-bd_OB-fold"/>
</dbReference>
<dbReference type="InterPro" id="IPR004365">
    <property type="entry name" value="NA-bd_OB_tRNA"/>
</dbReference>
<dbReference type="NCBIfam" id="TIGR00459">
    <property type="entry name" value="aspS_bact"/>
    <property type="match status" value="1"/>
</dbReference>
<dbReference type="NCBIfam" id="NF001750">
    <property type="entry name" value="PRK00476.1"/>
    <property type="match status" value="1"/>
</dbReference>
<dbReference type="PANTHER" id="PTHR22594:SF5">
    <property type="entry name" value="ASPARTATE--TRNA LIGASE, MITOCHONDRIAL"/>
    <property type="match status" value="1"/>
</dbReference>
<dbReference type="PANTHER" id="PTHR22594">
    <property type="entry name" value="ASPARTYL/LYSYL-TRNA SYNTHETASE"/>
    <property type="match status" value="1"/>
</dbReference>
<dbReference type="Pfam" id="PF02938">
    <property type="entry name" value="GAD"/>
    <property type="match status" value="1"/>
</dbReference>
<dbReference type="Pfam" id="PF00152">
    <property type="entry name" value="tRNA-synt_2"/>
    <property type="match status" value="1"/>
</dbReference>
<dbReference type="Pfam" id="PF01336">
    <property type="entry name" value="tRNA_anti-codon"/>
    <property type="match status" value="1"/>
</dbReference>
<dbReference type="PRINTS" id="PR01042">
    <property type="entry name" value="TRNASYNTHASP"/>
</dbReference>
<dbReference type="SUPFAM" id="SSF55681">
    <property type="entry name" value="Class II aaRS and biotin synthetases"/>
    <property type="match status" value="1"/>
</dbReference>
<dbReference type="SUPFAM" id="SSF55261">
    <property type="entry name" value="GAD domain-like"/>
    <property type="match status" value="1"/>
</dbReference>
<dbReference type="SUPFAM" id="SSF50249">
    <property type="entry name" value="Nucleic acid-binding proteins"/>
    <property type="match status" value="1"/>
</dbReference>
<dbReference type="PROSITE" id="PS50862">
    <property type="entry name" value="AA_TRNA_LIGASE_II"/>
    <property type="match status" value="1"/>
</dbReference>